<keyword id="KW-0067">ATP-binding</keyword>
<keyword id="KW-0436">Ligase</keyword>
<keyword id="KW-0460">Magnesium</keyword>
<keyword id="KW-0479">Metal-binding</keyword>
<keyword id="KW-0520">NAD</keyword>
<keyword id="KW-0547">Nucleotide-binding</keyword>
<protein>
    <recommendedName>
        <fullName evidence="1">NH(3)-dependent NAD(+) synthetase</fullName>
        <ecNumber evidence="1">6.3.1.5</ecNumber>
    </recommendedName>
</protein>
<reference key="1">
    <citation type="submission" date="2007-04" db="EMBL/GenBank/DDBJ databases">
        <title>Complete sequence of Shewanella putrefaciens CN-32.</title>
        <authorList>
            <consortium name="US DOE Joint Genome Institute"/>
            <person name="Copeland A."/>
            <person name="Lucas S."/>
            <person name="Lapidus A."/>
            <person name="Barry K."/>
            <person name="Detter J.C."/>
            <person name="Glavina del Rio T."/>
            <person name="Hammon N."/>
            <person name="Israni S."/>
            <person name="Dalin E."/>
            <person name="Tice H."/>
            <person name="Pitluck S."/>
            <person name="Chain P."/>
            <person name="Malfatti S."/>
            <person name="Shin M."/>
            <person name="Vergez L."/>
            <person name="Schmutz J."/>
            <person name="Larimer F."/>
            <person name="Land M."/>
            <person name="Hauser L."/>
            <person name="Kyrpides N."/>
            <person name="Mikhailova N."/>
            <person name="Romine M.F."/>
            <person name="Fredrickson J."/>
            <person name="Tiedje J."/>
            <person name="Richardson P."/>
        </authorList>
    </citation>
    <scope>NUCLEOTIDE SEQUENCE [LARGE SCALE GENOMIC DNA]</scope>
    <source>
        <strain>CN-32 / ATCC BAA-453</strain>
    </source>
</reference>
<evidence type="ECO:0000255" key="1">
    <source>
        <dbReference type="HAMAP-Rule" id="MF_00193"/>
    </source>
</evidence>
<gene>
    <name evidence="1" type="primary">nadE</name>
    <name type="ordered locus">Sputcn32_2294</name>
</gene>
<proteinExistence type="inferred from homology"/>
<accession>A4Y7T2</accession>
<sequence length="276" mass="30242">MKAQILREMKVLKAIEPEFEVQRRVAFIKTKLKEARSKALVLGISGGVDSSTAGRLCQLAVDSLNSEQANSDYQFIAVRLPYHIQKDEHEAQLACQFIQPSKLVTVNVHQGVDAVHGATLAAFVEAGLTLPDAAKVDFVKGNVKARMRMIAQYELAGLVGGLVVGTDHSAENITGFYTKWGDGACDLAPLFGLNKRQVRQLAAYLGAPESLVYKAPTADLEDNQPLLEDEVALGLTYAQIDDFLEGKEVDKSVETKLINIYKATQHKRQPIATIYD</sequence>
<name>NADE_SHEPC</name>
<dbReference type="EC" id="6.3.1.5" evidence="1"/>
<dbReference type="EMBL" id="CP000681">
    <property type="protein sequence ID" value="ABP76015.1"/>
    <property type="molecule type" value="Genomic_DNA"/>
</dbReference>
<dbReference type="SMR" id="A4Y7T2"/>
<dbReference type="STRING" id="319224.Sputcn32_2294"/>
<dbReference type="KEGG" id="spc:Sputcn32_2294"/>
<dbReference type="eggNOG" id="COG0171">
    <property type="taxonomic scope" value="Bacteria"/>
</dbReference>
<dbReference type="HOGENOM" id="CLU_059327_3_0_6"/>
<dbReference type="UniPathway" id="UPA00253">
    <property type="reaction ID" value="UER00333"/>
</dbReference>
<dbReference type="GO" id="GO:0005737">
    <property type="term" value="C:cytoplasm"/>
    <property type="evidence" value="ECO:0007669"/>
    <property type="project" value="InterPro"/>
</dbReference>
<dbReference type="GO" id="GO:0005524">
    <property type="term" value="F:ATP binding"/>
    <property type="evidence" value="ECO:0007669"/>
    <property type="project" value="UniProtKB-UniRule"/>
</dbReference>
<dbReference type="GO" id="GO:0004359">
    <property type="term" value="F:glutaminase activity"/>
    <property type="evidence" value="ECO:0007669"/>
    <property type="project" value="InterPro"/>
</dbReference>
<dbReference type="GO" id="GO:0046872">
    <property type="term" value="F:metal ion binding"/>
    <property type="evidence" value="ECO:0007669"/>
    <property type="project" value="UniProtKB-KW"/>
</dbReference>
<dbReference type="GO" id="GO:0003952">
    <property type="term" value="F:NAD+ synthase (glutamine-hydrolyzing) activity"/>
    <property type="evidence" value="ECO:0007669"/>
    <property type="project" value="InterPro"/>
</dbReference>
<dbReference type="GO" id="GO:0008795">
    <property type="term" value="F:NAD+ synthase activity"/>
    <property type="evidence" value="ECO:0007669"/>
    <property type="project" value="UniProtKB-UniRule"/>
</dbReference>
<dbReference type="GO" id="GO:0009435">
    <property type="term" value="P:NAD biosynthetic process"/>
    <property type="evidence" value="ECO:0007669"/>
    <property type="project" value="UniProtKB-UniRule"/>
</dbReference>
<dbReference type="CDD" id="cd00553">
    <property type="entry name" value="NAD_synthase"/>
    <property type="match status" value="1"/>
</dbReference>
<dbReference type="FunFam" id="3.40.50.620:FF:000015">
    <property type="entry name" value="NH(3)-dependent NAD(+) synthetase"/>
    <property type="match status" value="1"/>
</dbReference>
<dbReference type="Gene3D" id="3.40.50.620">
    <property type="entry name" value="HUPs"/>
    <property type="match status" value="1"/>
</dbReference>
<dbReference type="HAMAP" id="MF_00193">
    <property type="entry name" value="NadE_ammonia_dep"/>
    <property type="match status" value="1"/>
</dbReference>
<dbReference type="InterPro" id="IPR022310">
    <property type="entry name" value="NAD/GMP_synthase"/>
</dbReference>
<dbReference type="InterPro" id="IPR003694">
    <property type="entry name" value="NAD_synthase"/>
</dbReference>
<dbReference type="InterPro" id="IPR022926">
    <property type="entry name" value="NH(3)-dep_NAD(+)_synth"/>
</dbReference>
<dbReference type="InterPro" id="IPR014729">
    <property type="entry name" value="Rossmann-like_a/b/a_fold"/>
</dbReference>
<dbReference type="NCBIfam" id="TIGR00552">
    <property type="entry name" value="nadE"/>
    <property type="match status" value="1"/>
</dbReference>
<dbReference type="NCBIfam" id="NF001979">
    <property type="entry name" value="PRK00768.1"/>
    <property type="match status" value="1"/>
</dbReference>
<dbReference type="PANTHER" id="PTHR23090">
    <property type="entry name" value="NH 3 /GLUTAMINE-DEPENDENT NAD + SYNTHETASE"/>
    <property type="match status" value="1"/>
</dbReference>
<dbReference type="PANTHER" id="PTHR23090:SF7">
    <property type="entry name" value="NH(3)-DEPENDENT NAD(+) SYNTHETASE"/>
    <property type="match status" value="1"/>
</dbReference>
<dbReference type="Pfam" id="PF02540">
    <property type="entry name" value="NAD_synthase"/>
    <property type="match status" value="1"/>
</dbReference>
<dbReference type="SUPFAM" id="SSF52402">
    <property type="entry name" value="Adenine nucleotide alpha hydrolases-like"/>
    <property type="match status" value="1"/>
</dbReference>
<feature type="chain" id="PRO_1000077605" description="NH(3)-dependent NAD(+) synthetase">
    <location>
        <begin position="1"/>
        <end position="276"/>
    </location>
</feature>
<feature type="binding site" evidence="1">
    <location>
        <begin position="43"/>
        <end position="50"/>
    </location>
    <ligand>
        <name>ATP</name>
        <dbReference type="ChEBI" id="CHEBI:30616"/>
    </ligand>
</feature>
<feature type="binding site" evidence="1">
    <location>
        <position position="49"/>
    </location>
    <ligand>
        <name>Mg(2+)</name>
        <dbReference type="ChEBI" id="CHEBI:18420"/>
    </ligand>
</feature>
<feature type="binding site" evidence="1">
    <location>
        <position position="146"/>
    </location>
    <ligand>
        <name>deamido-NAD(+)</name>
        <dbReference type="ChEBI" id="CHEBI:58437"/>
    </ligand>
</feature>
<feature type="binding site" evidence="1">
    <location>
        <position position="166"/>
    </location>
    <ligand>
        <name>ATP</name>
        <dbReference type="ChEBI" id="CHEBI:30616"/>
    </ligand>
</feature>
<feature type="binding site" evidence="1">
    <location>
        <position position="171"/>
    </location>
    <ligand>
        <name>Mg(2+)</name>
        <dbReference type="ChEBI" id="CHEBI:18420"/>
    </ligand>
</feature>
<feature type="binding site" evidence="1">
    <location>
        <position position="179"/>
    </location>
    <ligand>
        <name>deamido-NAD(+)</name>
        <dbReference type="ChEBI" id="CHEBI:58437"/>
    </ligand>
</feature>
<feature type="binding site" evidence="1">
    <location>
        <position position="186"/>
    </location>
    <ligand>
        <name>deamido-NAD(+)</name>
        <dbReference type="ChEBI" id="CHEBI:58437"/>
    </ligand>
</feature>
<feature type="binding site" evidence="1">
    <location>
        <position position="195"/>
    </location>
    <ligand>
        <name>ATP</name>
        <dbReference type="ChEBI" id="CHEBI:30616"/>
    </ligand>
</feature>
<feature type="binding site" evidence="1">
    <location>
        <position position="217"/>
    </location>
    <ligand>
        <name>ATP</name>
        <dbReference type="ChEBI" id="CHEBI:30616"/>
    </ligand>
</feature>
<feature type="binding site" evidence="1">
    <location>
        <begin position="266"/>
        <end position="267"/>
    </location>
    <ligand>
        <name>deamido-NAD(+)</name>
        <dbReference type="ChEBI" id="CHEBI:58437"/>
    </ligand>
</feature>
<comment type="function">
    <text evidence="1">Catalyzes the ATP-dependent amidation of deamido-NAD to form NAD. Uses ammonia as a nitrogen source.</text>
</comment>
<comment type="catalytic activity">
    <reaction evidence="1">
        <text>deamido-NAD(+) + NH4(+) + ATP = AMP + diphosphate + NAD(+) + H(+)</text>
        <dbReference type="Rhea" id="RHEA:21188"/>
        <dbReference type="ChEBI" id="CHEBI:15378"/>
        <dbReference type="ChEBI" id="CHEBI:28938"/>
        <dbReference type="ChEBI" id="CHEBI:30616"/>
        <dbReference type="ChEBI" id="CHEBI:33019"/>
        <dbReference type="ChEBI" id="CHEBI:57540"/>
        <dbReference type="ChEBI" id="CHEBI:58437"/>
        <dbReference type="ChEBI" id="CHEBI:456215"/>
        <dbReference type="EC" id="6.3.1.5"/>
    </reaction>
</comment>
<comment type="pathway">
    <text evidence="1">Cofactor biosynthesis; NAD(+) biosynthesis; NAD(+) from deamido-NAD(+) (ammonia route): step 1/1.</text>
</comment>
<comment type="subunit">
    <text evidence="1">Homodimer.</text>
</comment>
<comment type="similarity">
    <text evidence="1">Belongs to the NAD synthetase family.</text>
</comment>
<organism>
    <name type="scientific">Shewanella putrefaciens (strain CN-32 / ATCC BAA-453)</name>
    <dbReference type="NCBI Taxonomy" id="319224"/>
    <lineage>
        <taxon>Bacteria</taxon>
        <taxon>Pseudomonadati</taxon>
        <taxon>Pseudomonadota</taxon>
        <taxon>Gammaproteobacteria</taxon>
        <taxon>Alteromonadales</taxon>
        <taxon>Shewanellaceae</taxon>
        <taxon>Shewanella</taxon>
    </lineage>
</organism>